<dbReference type="EC" id="2.1.3.15" evidence="1"/>
<dbReference type="EMBL" id="CP000964">
    <property type="protein sequence ID" value="ACI07958.1"/>
    <property type="molecule type" value="Genomic_DNA"/>
</dbReference>
<dbReference type="SMR" id="B5Y1I6"/>
<dbReference type="KEGG" id="kpe:KPK_4535"/>
<dbReference type="HOGENOM" id="CLU_015486_0_2_6"/>
<dbReference type="UniPathway" id="UPA00655">
    <property type="reaction ID" value="UER00711"/>
</dbReference>
<dbReference type="Proteomes" id="UP000001734">
    <property type="component" value="Chromosome"/>
</dbReference>
<dbReference type="GO" id="GO:0009317">
    <property type="term" value="C:acetyl-CoA carboxylase complex"/>
    <property type="evidence" value="ECO:0007669"/>
    <property type="project" value="InterPro"/>
</dbReference>
<dbReference type="GO" id="GO:0003989">
    <property type="term" value="F:acetyl-CoA carboxylase activity"/>
    <property type="evidence" value="ECO:0007669"/>
    <property type="project" value="InterPro"/>
</dbReference>
<dbReference type="GO" id="GO:0005524">
    <property type="term" value="F:ATP binding"/>
    <property type="evidence" value="ECO:0007669"/>
    <property type="project" value="UniProtKB-KW"/>
</dbReference>
<dbReference type="GO" id="GO:0016743">
    <property type="term" value="F:carboxyl- or carbamoyltransferase activity"/>
    <property type="evidence" value="ECO:0007669"/>
    <property type="project" value="UniProtKB-UniRule"/>
</dbReference>
<dbReference type="GO" id="GO:0006633">
    <property type="term" value="P:fatty acid biosynthetic process"/>
    <property type="evidence" value="ECO:0007669"/>
    <property type="project" value="UniProtKB-KW"/>
</dbReference>
<dbReference type="GO" id="GO:2001295">
    <property type="term" value="P:malonyl-CoA biosynthetic process"/>
    <property type="evidence" value="ECO:0007669"/>
    <property type="project" value="UniProtKB-UniRule"/>
</dbReference>
<dbReference type="FunFam" id="3.90.226.10:FF:000008">
    <property type="entry name" value="Acetyl-coenzyme A carboxylase carboxyl transferase subunit alpha"/>
    <property type="match status" value="1"/>
</dbReference>
<dbReference type="Gene3D" id="3.90.226.10">
    <property type="entry name" value="2-enoyl-CoA Hydratase, Chain A, domain 1"/>
    <property type="match status" value="1"/>
</dbReference>
<dbReference type="HAMAP" id="MF_00823">
    <property type="entry name" value="AcetylCoA_CT_alpha"/>
    <property type="match status" value="1"/>
</dbReference>
<dbReference type="InterPro" id="IPR001095">
    <property type="entry name" value="Acetyl_CoA_COase_a_su"/>
</dbReference>
<dbReference type="InterPro" id="IPR029045">
    <property type="entry name" value="ClpP/crotonase-like_dom_sf"/>
</dbReference>
<dbReference type="InterPro" id="IPR011763">
    <property type="entry name" value="COA_CT_C"/>
</dbReference>
<dbReference type="NCBIfam" id="TIGR00513">
    <property type="entry name" value="accA"/>
    <property type="match status" value="1"/>
</dbReference>
<dbReference type="NCBIfam" id="NF041504">
    <property type="entry name" value="AccA_sub"/>
    <property type="match status" value="1"/>
</dbReference>
<dbReference type="NCBIfam" id="NF004344">
    <property type="entry name" value="PRK05724.1"/>
    <property type="match status" value="1"/>
</dbReference>
<dbReference type="PANTHER" id="PTHR42853">
    <property type="entry name" value="ACETYL-COENZYME A CARBOXYLASE CARBOXYL TRANSFERASE SUBUNIT ALPHA"/>
    <property type="match status" value="1"/>
</dbReference>
<dbReference type="PANTHER" id="PTHR42853:SF3">
    <property type="entry name" value="ACETYL-COENZYME A CARBOXYLASE CARBOXYL TRANSFERASE SUBUNIT ALPHA, CHLOROPLASTIC"/>
    <property type="match status" value="1"/>
</dbReference>
<dbReference type="Pfam" id="PF03255">
    <property type="entry name" value="ACCA"/>
    <property type="match status" value="1"/>
</dbReference>
<dbReference type="PRINTS" id="PR01069">
    <property type="entry name" value="ACCCTRFRASEA"/>
</dbReference>
<dbReference type="SUPFAM" id="SSF52096">
    <property type="entry name" value="ClpP/crotonase"/>
    <property type="match status" value="1"/>
</dbReference>
<dbReference type="PROSITE" id="PS50989">
    <property type="entry name" value="COA_CT_CTER"/>
    <property type="match status" value="1"/>
</dbReference>
<accession>B5Y1I6</accession>
<comment type="function">
    <text evidence="1">Component of the acetyl coenzyme A carboxylase (ACC) complex. First, biotin carboxylase catalyzes the carboxylation of biotin on its carrier protein (BCCP) and then the CO(2) group is transferred by the carboxyltransferase to acetyl-CoA to form malonyl-CoA.</text>
</comment>
<comment type="catalytic activity">
    <reaction evidence="1">
        <text>N(6)-carboxybiotinyl-L-lysyl-[protein] + acetyl-CoA = N(6)-biotinyl-L-lysyl-[protein] + malonyl-CoA</text>
        <dbReference type="Rhea" id="RHEA:54728"/>
        <dbReference type="Rhea" id="RHEA-COMP:10505"/>
        <dbReference type="Rhea" id="RHEA-COMP:10506"/>
        <dbReference type="ChEBI" id="CHEBI:57288"/>
        <dbReference type="ChEBI" id="CHEBI:57384"/>
        <dbReference type="ChEBI" id="CHEBI:83144"/>
        <dbReference type="ChEBI" id="CHEBI:83145"/>
        <dbReference type="EC" id="2.1.3.15"/>
    </reaction>
</comment>
<comment type="pathway">
    <text evidence="1">Lipid metabolism; malonyl-CoA biosynthesis; malonyl-CoA from acetyl-CoA: step 1/1.</text>
</comment>
<comment type="subunit">
    <text evidence="1">Acetyl-CoA carboxylase is a heterohexamer composed of biotin carboxyl carrier protein (AccB), biotin carboxylase (AccC) and two subunits each of ACCase subunit alpha (AccA) and ACCase subunit beta (AccD).</text>
</comment>
<comment type="subcellular location">
    <subcellularLocation>
        <location evidence="1">Cytoplasm</location>
    </subcellularLocation>
</comment>
<comment type="similarity">
    <text evidence="1">Belongs to the AccA family.</text>
</comment>
<feature type="chain" id="PRO_1000134498" description="Acetyl-coenzyme A carboxylase carboxyl transferase subunit alpha">
    <location>
        <begin position="1"/>
        <end position="319"/>
    </location>
</feature>
<feature type="domain" description="CoA carboxyltransferase C-terminal" evidence="2">
    <location>
        <begin position="35"/>
        <end position="296"/>
    </location>
</feature>
<evidence type="ECO:0000255" key="1">
    <source>
        <dbReference type="HAMAP-Rule" id="MF_00823"/>
    </source>
</evidence>
<evidence type="ECO:0000255" key="2">
    <source>
        <dbReference type="PROSITE-ProRule" id="PRU01137"/>
    </source>
</evidence>
<proteinExistence type="inferred from homology"/>
<gene>
    <name evidence="1" type="primary">accA</name>
    <name type="ordered locus">KPK_4535</name>
</gene>
<name>ACCA_KLEP3</name>
<reference key="1">
    <citation type="journal article" date="2008" name="PLoS Genet.">
        <title>Complete genome sequence of the N2-fixing broad host range endophyte Klebsiella pneumoniae 342 and virulence predictions verified in mice.</title>
        <authorList>
            <person name="Fouts D.E."/>
            <person name="Tyler H.L."/>
            <person name="DeBoy R.T."/>
            <person name="Daugherty S."/>
            <person name="Ren Q."/>
            <person name="Badger J.H."/>
            <person name="Durkin A.S."/>
            <person name="Huot H."/>
            <person name="Shrivastava S."/>
            <person name="Kothari S."/>
            <person name="Dodson R.J."/>
            <person name="Mohamoud Y."/>
            <person name="Khouri H."/>
            <person name="Roesch L.F.W."/>
            <person name="Krogfelt K.A."/>
            <person name="Struve C."/>
            <person name="Triplett E.W."/>
            <person name="Methe B.A."/>
        </authorList>
    </citation>
    <scope>NUCLEOTIDE SEQUENCE [LARGE SCALE GENOMIC DNA]</scope>
    <source>
        <strain>342</strain>
    </source>
</reference>
<keyword id="KW-0067">ATP-binding</keyword>
<keyword id="KW-0963">Cytoplasm</keyword>
<keyword id="KW-0275">Fatty acid biosynthesis</keyword>
<keyword id="KW-0276">Fatty acid metabolism</keyword>
<keyword id="KW-0444">Lipid biosynthesis</keyword>
<keyword id="KW-0443">Lipid metabolism</keyword>
<keyword id="KW-0547">Nucleotide-binding</keyword>
<keyword id="KW-0808">Transferase</keyword>
<sequence>MSLNFLDFEQPIAELEAKIDSLTAVSRQDEKLDINIDEEVHRLREKSVELTRKIFADLGAWQVAQLARHPRRPYTLDYVRLAFDEFDELAGDRAYADDKAIVGGIARLDGRPVMIIGHQKGRETKEKIRRNFGMPAPEGYRKALRLMEMAERFKMPIITFIDTPGAYPGVGAEERGQSEAIARNLREMSRLSVPVICTVIGEGGSGGALAIGVGDKVNMLQYSTYSVISPEGCASILWKSADKAPLAAEAMGIVAPRLKELKLIDSIVQEPLGGAHRNPEAMAASLKAQLLADLADLDLLSEEELLNRRYQRLMSYGYA</sequence>
<organism>
    <name type="scientific">Klebsiella pneumoniae (strain 342)</name>
    <dbReference type="NCBI Taxonomy" id="507522"/>
    <lineage>
        <taxon>Bacteria</taxon>
        <taxon>Pseudomonadati</taxon>
        <taxon>Pseudomonadota</taxon>
        <taxon>Gammaproteobacteria</taxon>
        <taxon>Enterobacterales</taxon>
        <taxon>Enterobacteriaceae</taxon>
        <taxon>Klebsiella/Raoultella group</taxon>
        <taxon>Klebsiella</taxon>
        <taxon>Klebsiella pneumoniae complex</taxon>
    </lineage>
</organism>
<protein>
    <recommendedName>
        <fullName evidence="1">Acetyl-coenzyme A carboxylase carboxyl transferase subunit alpha</fullName>
        <shortName evidence="1">ACCase subunit alpha</shortName>
        <shortName evidence="1">Acetyl-CoA carboxylase carboxyltransferase subunit alpha</shortName>
        <ecNumber evidence="1">2.1.3.15</ecNumber>
    </recommendedName>
</protein>